<organism>
    <name type="scientific">Danio rerio</name>
    <name type="common">Zebrafish</name>
    <name type="synonym">Brachydanio rerio</name>
    <dbReference type="NCBI Taxonomy" id="7955"/>
    <lineage>
        <taxon>Eukaryota</taxon>
        <taxon>Metazoa</taxon>
        <taxon>Chordata</taxon>
        <taxon>Craniata</taxon>
        <taxon>Vertebrata</taxon>
        <taxon>Euteleostomi</taxon>
        <taxon>Actinopterygii</taxon>
        <taxon>Neopterygii</taxon>
        <taxon>Teleostei</taxon>
        <taxon>Ostariophysi</taxon>
        <taxon>Cypriniformes</taxon>
        <taxon>Danionidae</taxon>
        <taxon>Danioninae</taxon>
        <taxon>Danio</taxon>
    </lineage>
</organism>
<proteinExistence type="inferred from homology"/>
<keyword id="KW-0551">Lipid droplet</keyword>
<keyword id="KW-0520">NAD</keyword>
<keyword id="KW-0521">NADP</keyword>
<keyword id="KW-0560">Oxidoreductase</keyword>
<keyword id="KW-1185">Reference proteome</keyword>
<reference key="1">
    <citation type="journal article" date="2013" name="Nature">
        <title>The zebrafish reference genome sequence and its relationship to the human genome.</title>
        <authorList>
            <person name="Howe K."/>
            <person name="Clark M.D."/>
            <person name="Torroja C.F."/>
            <person name="Torrance J."/>
            <person name="Berthelot C."/>
            <person name="Muffato M."/>
            <person name="Collins J.E."/>
            <person name="Humphray S."/>
            <person name="McLaren K."/>
            <person name="Matthews L."/>
            <person name="McLaren S."/>
            <person name="Sealy I."/>
            <person name="Caccamo M."/>
            <person name="Churcher C."/>
            <person name="Scott C."/>
            <person name="Barrett J.C."/>
            <person name="Koch R."/>
            <person name="Rauch G.J."/>
            <person name="White S."/>
            <person name="Chow W."/>
            <person name="Kilian B."/>
            <person name="Quintais L.T."/>
            <person name="Guerra-Assuncao J.A."/>
            <person name="Zhou Y."/>
            <person name="Gu Y."/>
            <person name="Yen J."/>
            <person name="Vogel J.H."/>
            <person name="Eyre T."/>
            <person name="Redmond S."/>
            <person name="Banerjee R."/>
            <person name="Chi J."/>
            <person name="Fu B."/>
            <person name="Langley E."/>
            <person name="Maguire S.F."/>
            <person name="Laird G.K."/>
            <person name="Lloyd D."/>
            <person name="Kenyon E."/>
            <person name="Donaldson S."/>
            <person name="Sehra H."/>
            <person name="Almeida-King J."/>
            <person name="Loveland J."/>
            <person name="Trevanion S."/>
            <person name="Jones M."/>
            <person name="Quail M."/>
            <person name="Willey D."/>
            <person name="Hunt A."/>
            <person name="Burton J."/>
            <person name="Sims S."/>
            <person name="McLay K."/>
            <person name="Plumb B."/>
            <person name="Davis J."/>
            <person name="Clee C."/>
            <person name="Oliver K."/>
            <person name="Clark R."/>
            <person name="Riddle C."/>
            <person name="Elliot D."/>
            <person name="Threadgold G."/>
            <person name="Harden G."/>
            <person name="Ware D."/>
            <person name="Begum S."/>
            <person name="Mortimore B."/>
            <person name="Kerry G."/>
            <person name="Heath P."/>
            <person name="Phillimore B."/>
            <person name="Tracey A."/>
            <person name="Corby N."/>
            <person name="Dunn M."/>
            <person name="Johnson C."/>
            <person name="Wood J."/>
            <person name="Clark S."/>
            <person name="Pelan S."/>
            <person name="Griffiths G."/>
            <person name="Smith M."/>
            <person name="Glithero R."/>
            <person name="Howden P."/>
            <person name="Barker N."/>
            <person name="Lloyd C."/>
            <person name="Stevens C."/>
            <person name="Harley J."/>
            <person name="Holt K."/>
            <person name="Panagiotidis G."/>
            <person name="Lovell J."/>
            <person name="Beasley H."/>
            <person name="Henderson C."/>
            <person name="Gordon D."/>
            <person name="Auger K."/>
            <person name="Wright D."/>
            <person name="Collins J."/>
            <person name="Raisen C."/>
            <person name="Dyer L."/>
            <person name="Leung K."/>
            <person name="Robertson L."/>
            <person name="Ambridge K."/>
            <person name="Leongamornlert D."/>
            <person name="McGuire S."/>
            <person name="Gilderthorp R."/>
            <person name="Griffiths C."/>
            <person name="Manthravadi D."/>
            <person name="Nichol S."/>
            <person name="Barker G."/>
            <person name="Whitehead S."/>
            <person name="Kay M."/>
            <person name="Brown J."/>
            <person name="Murnane C."/>
            <person name="Gray E."/>
            <person name="Humphries M."/>
            <person name="Sycamore N."/>
            <person name="Barker D."/>
            <person name="Saunders D."/>
            <person name="Wallis J."/>
            <person name="Babbage A."/>
            <person name="Hammond S."/>
            <person name="Mashreghi-Mohammadi M."/>
            <person name="Barr L."/>
            <person name="Martin S."/>
            <person name="Wray P."/>
            <person name="Ellington A."/>
            <person name="Matthews N."/>
            <person name="Ellwood M."/>
            <person name="Woodmansey R."/>
            <person name="Clark G."/>
            <person name="Cooper J."/>
            <person name="Tromans A."/>
            <person name="Grafham D."/>
            <person name="Skuce C."/>
            <person name="Pandian R."/>
            <person name="Andrews R."/>
            <person name="Harrison E."/>
            <person name="Kimberley A."/>
            <person name="Garnett J."/>
            <person name="Fosker N."/>
            <person name="Hall R."/>
            <person name="Garner P."/>
            <person name="Kelly D."/>
            <person name="Bird C."/>
            <person name="Palmer S."/>
            <person name="Gehring I."/>
            <person name="Berger A."/>
            <person name="Dooley C.M."/>
            <person name="Ersan-Urun Z."/>
            <person name="Eser C."/>
            <person name="Geiger H."/>
            <person name="Geisler M."/>
            <person name="Karotki L."/>
            <person name="Kirn A."/>
            <person name="Konantz J."/>
            <person name="Konantz M."/>
            <person name="Oberlander M."/>
            <person name="Rudolph-Geiger S."/>
            <person name="Teucke M."/>
            <person name="Lanz C."/>
            <person name="Raddatz G."/>
            <person name="Osoegawa K."/>
            <person name="Zhu B."/>
            <person name="Rapp A."/>
            <person name="Widaa S."/>
            <person name="Langford C."/>
            <person name="Yang F."/>
            <person name="Schuster S.C."/>
            <person name="Carter N.P."/>
            <person name="Harrow J."/>
            <person name="Ning Z."/>
            <person name="Herrero J."/>
            <person name="Searle S.M."/>
            <person name="Enright A."/>
            <person name="Geisler R."/>
            <person name="Plasterk R.H."/>
            <person name="Lee C."/>
            <person name="Westerfield M."/>
            <person name="de Jong P.J."/>
            <person name="Zon L.I."/>
            <person name="Postlethwait J.H."/>
            <person name="Nusslein-Volhard C."/>
            <person name="Hubbard T.J."/>
            <person name="Roest Crollius H."/>
            <person name="Rogers J."/>
            <person name="Stemple D.L."/>
        </authorList>
    </citation>
    <scope>NUCLEOTIDE SEQUENCE [LARGE SCALE GENOMIC DNA]</scope>
    <source>
        <strain>Tuebingen</strain>
    </source>
</reference>
<reference key="2">
    <citation type="journal article" date="2006" name="Pigment Cell Res.">
        <title>pyewacket, a new zebrafish fin pigment pattern mutant.</title>
        <authorList>
            <person name="Mellgren E.M."/>
            <person name="Johnson S.L."/>
        </authorList>
    </citation>
    <scope>DISRUPTION PHENOTYPE</scope>
</reference>
<evidence type="ECO:0000250" key="1">
    <source>
        <dbReference type="UniProtKB" id="Q8N5I4"/>
    </source>
</evidence>
<evidence type="ECO:0000250" key="2">
    <source>
        <dbReference type="UniProtKB" id="Q99714"/>
    </source>
</evidence>
<evidence type="ECO:0000255" key="3">
    <source>
        <dbReference type="PROSITE-ProRule" id="PRU10001"/>
    </source>
</evidence>
<evidence type="ECO:0000269" key="4">
    <source>
    </source>
</evidence>
<evidence type="ECO:0000303" key="5">
    <source>
    </source>
</evidence>
<evidence type="ECO:0000305" key="6"/>
<evidence type="ECO:0000312" key="7">
    <source>
        <dbReference type="ZFIN" id="ZDB-GENE-060620-2"/>
    </source>
</evidence>
<sequence>MWRLLHCILGFIRLYLDGVKVLLYQLFNKSFRLPDLPEQNGKVAIVTGGTRGMGYEISRHLVSLDMHVIIAGNEEEEGLAAVKKIQEELNQGKVEFMYLDLASLTSVRQFVQRYNAKGLPLHVLVNNAGVMLVPERRTEDGFELHFGLNYLGHFLLTNLLLGALRKTGKPGKCSRIVIMSSATHYGGRLTLDDLQGRLCYSSHAAYAQSKLALLLLSYHLQEQLLVRGDPVTVNAVDPGMVDTALYDNLCSPAQVAKKPFAKLLFRTPAEGASTAIYAAAASELEGIGGLYLYNGRKTESSALSYDKRLQTKLWKQSCALVGLK</sequence>
<feature type="chain" id="PRO_5035035319" description="Polyprenol dehydrogenase" evidence="6">
    <location>
        <begin position="1"/>
        <end position="324"/>
    </location>
</feature>
<feature type="active site" description="Proton acceptor" evidence="3">
    <location>
        <position position="206"/>
    </location>
</feature>
<feature type="binding site" evidence="2">
    <location>
        <position position="206"/>
    </location>
    <ligand>
        <name>NAD(+)</name>
        <dbReference type="ChEBI" id="CHEBI:57540"/>
    </ligand>
</feature>
<feature type="binding site" evidence="2">
    <location>
        <position position="210"/>
    </location>
    <ligand>
        <name>NAD(+)</name>
        <dbReference type="ChEBI" id="CHEBI:57540"/>
    </ligand>
</feature>
<feature type="binding site" evidence="2">
    <location>
        <position position="243"/>
    </location>
    <ligand>
        <name>NAD(+)</name>
        <dbReference type="ChEBI" id="CHEBI:57540"/>
    </ligand>
</feature>
<name>DHRSX_DANRE</name>
<protein>
    <recommendedName>
        <fullName evidence="6">Polyprenol dehydrogenase</fullName>
        <ecNumber evidence="1">1.1.1.441</ecNumber>
    </recommendedName>
    <alternativeName>
        <fullName>Dehydrogenase/reductase SDR family member on chromosome Y</fullName>
    </alternativeName>
    <alternativeName>
        <fullName evidence="6">Dolichal reductase</fullName>
    </alternativeName>
    <alternativeName>
        <fullName evidence="5">Protein pyewacket</fullName>
    </alternativeName>
</protein>
<comment type="function">
    <text evidence="1">Oxidoreductase that plays a key role in early steps of protein N-linked glycosylation by mediating two non-consecutive steps in dolichol biosynthesis (By similarity). Acts both as a NAD(+)-dependent dehydrogenase and as a NADPH-dependent reductase during the conversion of polyprenol into dolichol (By similarity). First catalyzes the NAD(+)-dependent dehydrogenation of polyprenol into polyprenal; polyprenal is then reduced into dolichal by srd5a3 (By similarity). It then catalyzes the NADPH-dependent reduction of dolichal into dolichol (By similarity).</text>
</comment>
<comment type="catalytic activity">
    <reaction evidence="1">
        <text>a di-trans,poly-cis-polyprenol + NAD(+) = a di-trans,poly-cis-polyprenal + NADH + H(+)</text>
        <dbReference type="Rhea" id="RHEA:80719"/>
        <dbReference type="Rhea" id="RHEA-COMP:19496"/>
        <dbReference type="Rhea" id="RHEA-COMP:19536"/>
        <dbReference type="ChEBI" id="CHEBI:15378"/>
        <dbReference type="ChEBI" id="CHEBI:57540"/>
        <dbReference type="ChEBI" id="CHEBI:57945"/>
        <dbReference type="ChEBI" id="CHEBI:67132"/>
        <dbReference type="ChEBI" id="CHEBI:231623"/>
        <dbReference type="EC" id="1.1.1.441"/>
    </reaction>
    <physiologicalReaction direction="left-to-right" evidence="1">
        <dbReference type="Rhea" id="RHEA:80720"/>
    </physiologicalReaction>
</comment>
<comment type="catalytic activity">
    <reaction evidence="1">
        <text>a di-trans,poly-cis-polyprenol + NADP(+) = a di-trans,poly-cis-polyprenal + NADPH + H(+)</text>
        <dbReference type="Rhea" id="RHEA:80723"/>
        <dbReference type="Rhea" id="RHEA-COMP:19496"/>
        <dbReference type="Rhea" id="RHEA-COMP:19536"/>
        <dbReference type="ChEBI" id="CHEBI:15378"/>
        <dbReference type="ChEBI" id="CHEBI:57783"/>
        <dbReference type="ChEBI" id="CHEBI:58349"/>
        <dbReference type="ChEBI" id="CHEBI:67132"/>
        <dbReference type="ChEBI" id="CHEBI:231623"/>
        <dbReference type="EC" id="1.1.1.441"/>
    </reaction>
    <physiologicalReaction direction="left-to-right" evidence="1">
        <dbReference type="Rhea" id="RHEA:80724"/>
    </physiologicalReaction>
</comment>
<comment type="catalytic activity">
    <reaction evidence="1">
        <text>a di-trans,poly-cis-dolichol + NADP(+) = a di-trans,poly-cis-dolichal + NADPH + H(+)</text>
        <dbReference type="Rhea" id="RHEA:80731"/>
        <dbReference type="Rhea" id="RHEA-COMP:19495"/>
        <dbReference type="Rhea" id="RHEA-COMP:19537"/>
        <dbReference type="ChEBI" id="CHEBI:15378"/>
        <dbReference type="ChEBI" id="CHEBI:16091"/>
        <dbReference type="ChEBI" id="CHEBI:57783"/>
        <dbReference type="ChEBI" id="CHEBI:58349"/>
        <dbReference type="ChEBI" id="CHEBI:231637"/>
        <dbReference type="EC" id="1.1.1.441"/>
    </reaction>
    <physiologicalReaction direction="right-to-left" evidence="1">
        <dbReference type="Rhea" id="RHEA:80733"/>
    </physiologicalReaction>
</comment>
<comment type="catalytic activity">
    <reaction evidence="1">
        <text>a di-trans,poly-cis-dolichol + NAD(+) = a di-trans,poly-cis-dolichal + NADH + H(+)</text>
        <dbReference type="Rhea" id="RHEA:80735"/>
        <dbReference type="Rhea" id="RHEA-COMP:19495"/>
        <dbReference type="Rhea" id="RHEA-COMP:19537"/>
        <dbReference type="ChEBI" id="CHEBI:15378"/>
        <dbReference type="ChEBI" id="CHEBI:16091"/>
        <dbReference type="ChEBI" id="CHEBI:57540"/>
        <dbReference type="ChEBI" id="CHEBI:57945"/>
        <dbReference type="ChEBI" id="CHEBI:231637"/>
        <dbReference type="EC" id="1.1.1.441"/>
    </reaction>
    <physiologicalReaction direction="right-to-left" evidence="1">
        <dbReference type="Rhea" id="RHEA:80737"/>
    </physiologicalReaction>
</comment>
<comment type="pathway">
    <text evidence="1">Protein modification; protein glycosylation.</text>
</comment>
<comment type="subcellular location">
    <subcellularLocation>
        <location evidence="1">Lipid droplet</location>
    </subcellularLocation>
</comment>
<comment type="disruption phenotype">
    <text evidence="4">Impaired fin pigmentation (PubMed:16704457). Mutants have fin melanocyte pigment pattern defects and fewer xanthophores (PubMed:16704457).</text>
</comment>
<comment type="similarity">
    <text evidence="6">Belongs to the short-chain dehydrogenases/reductases (SDR) family.</text>
</comment>
<accession>B8A5W4</accession>
<accession>A0A8M1NZL5</accession>
<accession>A0A8M3AHT1</accession>
<gene>
    <name evidence="7" type="primary">dhrsx</name>
    <name evidence="5" type="synonym">pye</name>
</gene>
<dbReference type="EC" id="1.1.1.441" evidence="1"/>
<dbReference type="EMBL" id="AL929559">
    <property type="status" value="NOT_ANNOTATED_CDS"/>
    <property type="molecule type" value="Genomic_DNA"/>
</dbReference>
<dbReference type="EMBL" id="BX784035">
    <property type="status" value="NOT_ANNOTATED_CDS"/>
    <property type="molecule type" value="Genomic_DNA"/>
</dbReference>
<dbReference type="EMBL" id="CU041391">
    <property type="status" value="NOT_ANNOTATED_CDS"/>
    <property type="molecule type" value="Genomic_DNA"/>
</dbReference>
<dbReference type="RefSeq" id="NP_001243648.1">
    <property type="nucleotide sequence ID" value="NM_001256719.1"/>
</dbReference>
<dbReference type="SMR" id="B8A5W4"/>
<dbReference type="FunCoup" id="B8A5W4">
    <property type="interactions" value="2"/>
</dbReference>
<dbReference type="STRING" id="7955.ENSDARP00000150008"/>
<dbReference type="PaxDb" id="7955-ENSDARP00000100957"/>
<dbReference type="GeneID" id="100318301"/>
<dbReference type="KEGG" id="dre:100318301"/>
<dbReference type="AGR" id="ZFIN:ZDB-GENE-060620-2"/>
<dbReference type="CTD" id="207063"/>
<dbReference type="ZFIN" id="ZDB-GENE-060620-2">
    <property type="gene designation" value="dhrsx"/>
</dbReference>
<dbReference type="eggNOG" id="KOG1208">
    <property type="taxonomic scope" value="Eukaryota"/>
</dbReference>
<dbReference type="OMA" id="HYAARDR"/>
<dbReference type="OrthoDB" id="191139at2759"/>
<dbReference type="TreeFam" id="TF105429"/>
<dbReference type="UniPathway" id="UPA00378"/>
<dbReference type="Proteomes" id="UP000000437">
    <property type="component" value="Chromosome 1"/>
</dbReference>
<dbReference type="Bgee" id="ENSDARG00000079280">
    <property type="expression patterns" value="Expressed in brain and 21 other cell types or tissues"/>
</dbReference>
<dbReference type="GO" id="GO:0005811">
    <property type="term" value="C:lipid droplet"/>
    <property type="evidence" value="ECO:0000250"/>
    <property type="project" value="UniProtKB"/>
</dbReference>
<dbReference type="GO" id="GO:0160197">
    <property type="term" value="F:dolichal reductase [NAD(P)+] activity"/>
    <property type="evidence" value="ECO:0000250"/>
    <property type="project" value="UniProtKB"/>
</dbReference>
<dbReference type="GO" id="GO:0160196">
    <property type="term" value="F:polyprenol dehydrogenase activity"/>
    <property type="evidence" value="ECO:0000250"/>
    <property type="project" value="UniProtKB"/>
</dbReference>
<dbReference type="GO" id="GO:0019408">
    <property type="term" value="P:dolichol biosynthetic process"/>
    <property type="evidence" value="ECO:0000250"/>
    <property type="project" value="UniProtKB"/>
</dbReference>
<dbReference type="Gene3D" id="3.40.50.720">
    <property type="entry name" value="NAD(P)-binding Rossmann-like Domain"/>
    <property type="match status" value="1"/>
</dbReference>
<dbReference type="InterPro" id="IPR036291">
    <property type="entry name" value="NAD(P)-bd_dom_sf"/>
</dbReference>
<dbReference type="InterPro" id="IPR020904">
    <property type="entry name" value="Sc_DH/Rdtase_CS"/>
</dbReference>
<dbReference type="InterPro" id="IPR002347">
    <property type="entry name" value="SDR_fam"/>
</dbReference>
<dbReference type="PANTHER" id="PTHR24320:SF264">
    <property type="entry name" value="DEHYDROGENASE_REDUCTASE SDR FAMILY MEMBER ON CHROMOSOME X"/>
    <property type="match status" value="1"/>
</dbReference>
<dbReference type="PANTHER" id="PTHR24320">
    <property type="entry name" value="RETINOL DEHYDROGENASE"/>
    <property type="match status" value="1"/>
</dbReference>
<dbReference type="Pfam" id="PF00106">
    <property type="entry name" value="adh_short"/>
    <property type="match status" value="1"/>
</dbReference>
<dbReference type="PRINTS" id="PR00081">
    <property type="entry name" value="GDHRDH"/>
</dbReference>
<dbReference type="SUPFAM" id="SSF51735">
    <property type="entry name" value="NAD(P)-binding Rossmann-fold domains"/>
    <property type="match status" value="1"/>
</dbReference>
<dbReference type="PROSITE" id="PS00061">
    <property type="entry name" value="ADH_SHORT"/>
    <property type="match status" value="1"/>
</dbReference>